<comment type="function">
    <text evidence="1">Required for the first step of diphthamide biosynthesis, a post-translational modification of histidine which occurs in elongation factor 2. DPH1 and DPH2 transfer a 3-amino-3-carboxypropyl (ACP) group from S-adenosyl-L-methionine (SAM) to a histidine residue, the reaction is assisted by a reduction system comprising DPH3 and a NADH-dependent reductase, predominantly CBR1 (By similarity). Facilitates the reduction of the catalytic iron-sulfur cluster found in the DPH1 subunit (By similarity).</text>
</comment>
<comment type="cofactor">
    <cofactor evidence="1">
        <name>[4Fe-4S] cluster</name>
        <dbReference type="ChEBI" id="CHEBI:49883"/>
    </cofactor>
    <text evidence="1">Binds 1 [4Fe-4S] cluster per subunit. The cluster facilitates the reduction of the catalytic iron-sulfur cluster in the DPH1 subunit.</text>
</comment>
<comment type="pathway">
    <text evidence="1">Protein modification; peptidyl-diphthamide biosynthesis.</text>
</comment>
<comment type="subunit">
    <text evidence="1">Component of the 2-(3-amino-3-carboxypropyl)histidine synthase complex composed of DPH1, DPH2, DPH3 and a NADH-dependent reductase, predominantly CBR1.</text>
</comment>
<comment type="subcellular location">
    <subcellularLocation>
        <location evidence="1">Cytoplasm</location>
    </subcellularLocation>
</comment>
<comment type="similarity">
    <text evidence="2">Belongs to the DPH1/DPH2 family. DPH2 subfamily.</text>
</comment>
<sequence>MSNEDILVPAALSTHQDESDFTFQKFDSDSMERSFYLGPLSSQDELWDKLMQYYSIDKLIAYLQRNPEYVQITLQFPDTLVKDSSFIIRALQDKLDGDGAGRKFWALADTAYSACCVDEVAAEHVKGDLVIHFGDACLNAIQKLPVVYDFGKPFLDTDVLLACFTEEFKDKDQKICLMSNASYTHHIPDLYSRLKSNGYTNVVYSVVNTGLLTETAEIIDNTTPLSDTDELFTLGNRVLMGARQEEDIDEETLRNEYALFHITMPHDPHLLYLTTVFESIHTYDVADQVISNGPYPSLTRRYKNMHKARTAGCIGILVNTLSIRGTRETVNKLIKLIRENGKKHYLFVVGKPNVPKLANFEPVDIWCILGCGQSGIIVDEFGEFYKPIITPYELTLALNFEVTWTGKWIIDFQKAITEIDNSLAELGIDDSKHGNDSDHDLDAPEFDAVTGKYVSSSRPLRALNHLQLDAPSNEDKQVMARVNGGTVIKGTVSTAVEHLANRAWTGLGSDYKDDEGYEEDGATVEEGISGIARGYEFDQEDAARKSQNQSQ</sequence>
<protein>
    <recommendedName>
        <fullName evidence="2">2-(3-amino-3-carboxypropyl)histidine synthase subunit 2</fullName>
    </recommendedName>
    <alternativeName>
        <fullName>Diphthamide biosynthesis protein 2</fullName>
    </alternativeName>
    <alternativeName>
        <fullName evidence="2">Diphtheria toxin resistance protein 2</fullName>
    </alternativeName>
    <alternativeName>
        <fullName evidence="2">S-adenosyl-L-methionine:L-histidine 3-amino-3-carboxypropyltransferase 2</fullName>
    </alternativeName>
</protein>
<proteinExistence type="inferred from homology"/>
<reference key="1">
    <citation type="journal article" date="2004" name="Nature">
        <title>Genome evolution in yeasts.</title>
        <authorList>
            <person name="Dujon B."/>
            <person name="Sherman D."/>
            <person name="Fischer G."/>
            <person name="Durrens P."/>
            <person name="Casaregola S."/>
            <person name="Lafontaine I."/>
            <person name="de Montigny J."/>
            <person name="Marck C."/>
            <person name="Neuveglise C."/>
            <person name="Talla E."/>
            <person name="Goffard N."/>
            <person name="Frangeul L."/>
            <person name="Aigle M."/>
            <person name="Anthouard V."/>
            <person name="Babour A."/>
            <person name="Barbe V."/>
            <person name="Barnay S."/>
            <person name="Blanchin S."/>
            <person name="Beckerich J.-M."/>
            <person name="Beyne E."/>
            <person name="Bleykasten C."/>
            <person name="Boisrame A."/>
            <person name="Boyer J."/>
            <person name="Cattolico L."/>
            <person name="Confanioleri F."/>
            <person name="de Daruvar A."/>
            <person name="Despons L."/>
            <person name="Fabre E."/>
            <person name="Fairhead C."/>
            <person name="Ferry-Dumazet H."/>
            <person name="Groppi A."/>
            <person name="Hantraye F."/>
            <person name="Hennequin C."/>
            <person name="Jauniaux N."/>
            <person name="Joyet P."/>
            <person name="Kachouri R."/>
            <person name="Kerrest A."/>
            <person name="Koszul R."/>
            <person name="Lemaire M."/>
            <person name="Lesur I."/>
            <person name="Ma L."/>
            <person name="Muller H."/>
            <person name="Nicaud J.-M."/>
            <person name="Nikolski M."/>
            <person name="Oztas S."/>
            <person name="Ozier-Kalogeropoulos O."/>
            <person name="Pellenz S."/>
            <person name="Potier S."/>
            <person name="Richard G.-F."/>
            <person name="Straub M.-L."/>
            <person name="Suleau A."/>
            <person name="Swennen D."/>
            <person name="Tekaia F."/>
            <person name="Wesolowski-Louvel M."/>
            <person name="Westhof E."/>
            <person name="Wirth B."/>
            <person name="Zeniou-Meyer M."/>
            <person name="Zivanovic Y."/>
            <person name="Bolotin-Fukuhara M."/>
            <person name="Thierry A."/>
            <person name="Bouchier C."/>
            <person name="Caudron B."/>
            <person name="Scarpelli C."/>
            <person name="Gaillardin C."/>
            <person name="Weissenbach J."/>
            <person name="Wincker P."/>
            <person name="Souciet J.-L."/>
        </authorList>
    </citation>
    <scope>NUCLEOTIDE SEQUENCE [LARGE SCALE GENOMIC DNA]</scope>
    <source>
        <strain>ATCC 2001 / BCRC 20586 / JCM 3761 / NBRC 0622 / NRRL Y-65 / CBS 138</strain>
    </source>
</reference>
<keyword id="KW-0963">Cytoplasm</keyword>
<keyword id="KW-0408">Iron</keyword>
<keyword id="KW-0411">Iron-sulfur</keyword>
<keyword id="KW-0479">Metal-binding</keyword>
<keyword id="KW-1185">Reference proteome</keyword>
<evidence type="ECO:0000250" key="1">
    <source>
        <dbReference type="UniProtKB" id="P32461"/>
    </source>
</evidence>
<evidence type="ECO:0000305" key="2"/>
<organism>
    <name type="scientific">Candida glabrata (strain ATCC 2001 / BCRC 20586 / JCM 3761 / NBRC 0622 / NRRL Y-65 / CBS 138)</name>
    <name type="common">Yeast</name>
    <name type="synonym">Nakaseomyces glabratus</name>
    <dbReference type="NCBI Taxonomy" id="284593"/>
    <lineage>
        <taxon>Eukaryota</taxon>
        <taxon>Fungi</taxon>
        <taxon>Dikarya</taxon>
        <taxon>Ascomycota</taxon>
        <taxon>Saccharomycotina</taxon>
        <taxon>Saccharomycetes</taxon>
        <taxon>Saccharomycetales</taxon>
        <taxon>Saccharomycetaceae</taxon>
        <taxon>Nakaseomyces</taxon>
    </lineage>
</organism>
<name>DPH2_CANGA</name>
<gene>
    <name type="primary">DPH2</name>
    <name type="ordered locus">CAGL0J04576g</name>
</gene>
<accession>Q6FPD9</accession>
<feature type="chain" id="PRO_0000083385" description="2-(3-amino-3-carboxypropyl)histidine synthase subunit 2">
    <location>
        <begin position="1"/>
        <end position="551"/>
    </location>
</feature>
<feature type="binding site" evidence="1">
    <location>
        <position position="116"/>
    </location>
    <ligand>
        <name>[4Fe-4S] cluster</name>
        <dbReference type="ChEBI" id="CHEBI:49883"/>
    </ligand>
</feature>
<feature type="binding site" evidence="1">
    <location>
        <position position="137"/>
    </location>
    <ligand>
        <name>[4Fe-4S] cluster</name>
        <dbReference type="ChEBI" id="CHEBI:49883"/>
    </ligand>
</feature>
<feature type="binding site" evidence="1">
    <location>
        <position position="371"/>
    </location>
    <ligand>
        <name>[4Fe-4S] cluster</name>
        <dbReference type="ChEBI" id="CHEBI:49883"/>
    </ligand>
</feature>
<dbReference type="EMBL" id="CR380956">
    <property type="protein sequence ID" value="CAG60854.1"/>
    <property type="molecule type" value="Genomic_DNA"/>
</dbReference>
<dbReference type="RefSeq" id="XP_447905.1">
    <property type="nucleotide sequence ID" value="XM_447905.1"/>
</dbReference>
<dbReference type="SMR" id="Q6FPD9"/>
<dbReference type="FunCoup" id="Q6FPD9">
    <property type="interactions" value="1010"/>
</dbReference>
<dbReference type="STRING" id="284593.Q6FPD9"/>
<dbReference type="EnsemblFungi" id="CAGL0J04576g-T">
    <property type="protein sequence ID" value="CAGL0J04576g-T-p1"/>
    <property type="gene ID" value="CAGL0J04576g"/>
</dbReference>
<dbReference type="KEGG" id="cgr:2889446"/>
<dbReference type="CGD" id="CAL0133634">
    <property type="gene designation" value="CAGL0J04576g"/>
</dbReference>
<dbReference type="VEuPathDB" id="FungiDB:CAGL0J04576g"/>
<dbReference type="eggNOG" id="KOG2648">
    <property type="taxonomic scope" value="Eukaryota"/>
</dbReference>
<dbReference type="HOGENOM" id="CLU_015210_1_0_1"/>
<dbReference type="InParanoid" id="Q6FPD9"/>
<dbReference type="OMA" id="QIWNENH"/>
<dbReference type="UniPathway" id="UPA00559"/>
<dbReference type="Proteomes" id="UP000002428">
    <property type="component" value="Chromosome J"/>
</dbReference>
<dbReference type="GO" id="GO:0120513">
    <property type="term" value="C:2-(3-amino-3-carboxypropyl)histidine synthase complex"/>
    <property type="evidence" value="ECO:0000250"/>
    <property type="project" value="UniProtKB"/>
</dbReference>
<dbReference type="GO" id="GO:0005737">
    <property type="term" value="C:cytoplasm"/>
    <property type="evidence" value="ECO:0007669"/>
    <property type="project" value="UniProtKB-SubCell"/>
</dbReference>
<dbReference type="GO" id="GO:0090560">
    <property type="term" value="F:2-(3-amino-3-carboxypropyl)histidine synthase activity"/>
    <property type="evidence" value="ECO:0007669"/>
    <property type="project" value="UniProtKB-EC"/>
</dbReference>
<dbReference type="GO" id="GO:0051539">
    <property type="term" value="F:4 iron, 4 sulfur cluster binding"/>
    <property type="evidence" value="ECO:0000250"/>
    <property type="project" value="UniProtKB"/>
</dbReference>
<dbReference type="GO" id="GO:0046872">
    <property type="term" value="F:metal ion binding"/>
    <property type="evidence" value="ECO:0007669"/>
    <property type="project" value="UniProtKB-KW"/>
</dbReference>
<dbReference type="GO" id="GO:0017183">
    <property type="term" value="P:protein histidyl modification to diphthamide"/>
    <property type="evidence" value="ECO:0000250"/>
    <property type="project" value="UniProtKB"/>
</dbReference>
<dbReference type="FunFam" id="3.40.50.11860:FF:000001">
    <property type="entry name" value="2-(3-amino-3-carboxypropyl)histidine synthase subunit 2"/>
    <property type="match status" value="1"/>
</dbReference>
<dbReference type="Gene3D" id="3.40.50.11840">
    <property type="entry name" value="Diphthamide synthesis DPH1/DPH2 domain 1"/>
    <property type="match status" value="1"/>
</dbReference>
<dbReference type="Gene3D" id="3.40.50.11860">
    <property type="entry name" value="Diphthamide synthesis DPH1/DPH2 domain 3"/>
    <property type="match status" value="1"/>
</dbReference>
<dbReference type="InterPro" id="IPR010014">
    <property type="entry name" value="DHP2"/>
</dbReference>
<dbReference type="InterPro" id="IPR016435">
    <property type="entry name" value="DPH1/DPH2"/>
</dbReference>
<dbReference type="InterPro" id="IPR042263">
    <property type="entry name" value="DPH1/DPH2_1"/>
</dbReference>
<dbReference type="InterPro" id="IPR042265">
    <property type="entry name" value="DPH1/DPH2_3"/>
</dbReference>
<dbReference type="NCBIfam" id="TIGR00322">
    <property type="entry name" value="diphth2_R"/>
    <property type="match status" value="1"/>
</dbReference>
<dbReference type="NCBIfam" id="TIGR00272">
    <property type="entry name" value="DPH2"/>
    <property type="match status" value="1"/>
</dbReference>
<dbReference type="PANTHER" id="PTHR10762:SF2">
    <property type="entry name" value="2-(3-AMINO-3-CARBOXYPROPYL)HISTIDINE SYNTHASE SUBUNIT 2"/>
    <property type="match status" value="1"/>
</dbReference>
<dbReference type="PANTHER" id="PTHR10762">
    <property type="entry name" value="DIPHTHAMIDE BIOSYNTHESIS PROTEIN"/>
    <property type="match status" value="1"/>
</dbReference>
<dbReference type="Pfam" id="PF01866">
    <property type="entry name" value="Diphthamide_syn"/>
    <property type="match status" value="1"/>
</dbReference>
<dbReference type="SFLD" id="SFLDG01121">
    <property type="entry name" value="Diphthamide_biosynthesis"/>
    <property type="match status" value="1"/>
</dbReference>
<dbReference type="SFLD" id="SFLDF00408">
    <property type="entry name" value="Diphthamide_biosynthesis_famil"/>
    <property type="match status" value="1"/>
</dbReference>
<dbReference type="SFLD" id="SFLDS00032">
    <property type="entry name" value="Radical_SAM_3-amino-3-carboxyp"/>
    <property type="match status" value="1"/>
</dbReference>